<proteinExistence type="evidence at transcript level"/>
<organism>
    <name type="scientific">Arabidopsis thaliana</name>
    <name type="common">Mouse-ear cress</name>
    <dbReference type="NCBI Taxonomy" id="3702"/>
    <lineage>
        <taxon>Eukaryota</taxon>
        <taxon>Viridiplantae</taxon>
        <taxon>Streptophyta</taxon>
        <taxon>Embryophyta</taxon>
        <taxon>Tracheophyta</taxon>
        <taxon>Spermatophyta</taxon>
        <taxon>Magnoliopsida</taxon>
        <taxon>eudicotyledons</taxon>
        <taxon>Gunneridae</taxon>
        <taxon>Pentapetalae</taxon>
        <taxon>rosids</taxon>
        <taxon>malvids</taxon>
        <taxon>Brassicales</taxon>
        <taxon>Brassicaceae</taxon>
        <taxon>Camelineae</taxon>
        <taxon>Arabidopsis</taxon>
    </lineage>
</organism>
<evidence type="ECO:0000250" key="1"/>
<evidence type="ECO:0000255" key="2"/>
<evidence type="ECO:0000305" key="3"/>
<protein>
    <recommendedName>
        <fullName>Defensin-like protein 275</fullName>
    </recommendedName>
</protein>
<sequence length="82" mass="9586">MALSKFQLVALLITYTLLFSCQSKIVKRMQVGPSECVYRGRCRDSYECRSRCGPPEFSHETLGLCMFDYDDYEYFCCCTTNY</sequence>
<gene>
    <name type="ordered locus">At1g35435</name>
    <name type="ORF">F12A4</name>
</gene>
<reference key="1">
    <citation type="journal article" date="2000" name="Nature">
        <title>Sequence and analysis of chromosome 1 of the plant Arabidopsis thaliana.</title>
        <authorList>
            <person name="Theologis A."/>
            <person name="Ecker J.R."/>
            <person name="Palm C.J."/>
            <person name="Federspiel N.A."/>
            <person name="Kaul S."/>
            <person name="White O."/>
            <person name="Alonso J."/>
            <person name="Altafi H."/>
            <person name="Araujo R."/>
            <person name="Bowman C.L."/>
            <person name="Brooks S.Y."/>
            <person name="Buehler E."/>
            <person name="Chan A."/>
            <person name="Chao Q."/>
            <person name="Chen H."/>
            <person name="Cheuk R.F."/>
            <person name="Chin C.W."/>
            <person name="Chung M.K."/>
            <person name="Conn L."/>
            <person name="Conway A.B."/>
            <person name="Conway A.R."/>
            <person name="Creasy T.H."/>
            <person name="Dewar K."/>
            <person name="Dunn P."/>
            <person name="Etgu P."/>
            <person name="Feldblyum T.V."/>
            <person name="Feng J.-D."/>
            <person name="Fong B."/>
            <person name="Fujii C.Y."/>
            <person name="Gill J.E."/>
            <person name="Goldsmith A.D."/>
            <person name="Haas B."/>
            <person name="Hansen N.F."/>
            <person name="Hughes B."/>
            <person name="Huizar L."/>
            <person name="Hunter J.L."/>
            <person name="Jenkins J."/>
            <person name="Johnson-Hopson C."/>
            <person name="Khan S."/>
            <person name="Khaykin E."/>
            <person name="Kim C.J."/>
            <person name="Koo H.L."/>
            <person name="Kremenetskaia I."/>
            <person name="Kurtz D.B."/>
            <person name="Kwan A."/>
            <person name="Lam B."/>
            <person name="Langin-Hooper S."/>
            <person name="Lee A."/>
            <person name="Lee J.M."/>
            <person name="Lenz C.A."/>
            <person name="Li J.H."/>
            <person name="Li Y.-P."/>
            <person name="Lin X."/>
            <person name="Liu S.X."/>
            <person name="Liu Z.A."/>
            <person name="Luros J.S."/>
            <person name="Maiti R."/>
            <person name="Marziali A."/>
            <person name="Militscher J."/>
            <person name="Miranda M."/>
            <person name="Nguyen M."/>
            <person name="Nierman W.C."/>
            <person name="Osborne B.I."/>
            <person name="Pai G."/>
            <person name="Peterson J."/>
            <person name="Pham P.K."/>
            <person name="Rizzo M."/>
            <person name="Rooney T."/>
            <person name="Rowley D."/>
            <person name="Sakano H."/>
            <person name="Salzberg S.L."/>
            <person name="Schwartz J.R."/>
            <person name="Shinn P."/>
            <person name="Southwick A.M."/>
            <person name="Sun H."/>
            <person name="Tallon L.J."/>
            <person name="Tambunga G."/>
            <person name="Toriumi M.J."/>
            <person name="Town C.D."/>
            <person name="Utterback T."/>
            <person name="Van Aken S."/>
            <person name="Vaysberg M."/>
            <person name="Vysotskaia V.S."/>
            <person name="Walker M."/>
            <person name="Wu D."/>
            <person name="Yu G."/>
            <person name="Fraser C.M."/>
            <person name="Venter J.C."/>
            <person name="Davis R.W."/>
        </authorList>
    </citation>
    <scope>NUCLEOTIDE SEQUENCE [LARGE SCALE GENOMIC DNA]</scope>
    <source>
        <strain>cv. Columbia</strain>
    </source>
</reference>
<reference key="2">
    <citation type="journal article" date="2017" name="Plant J.">
        <title>Araport11: a complete reannotation of the Arabidopsis thaliana reference genome.</title>
        <authorList>
            <person name="Cheng C.Y."/>
            <person name="Krishnakumar V."/>
            <person name="Chan A.P."/>
            <person name="Thibaud-Nissen F."/>
            <person name="Schobel S."/>
            <person name="Town C.D."/>
        </authorList>
    </citation>
    <scope>GENOME REANNOTATION</scope>
    <source>
        <strain>cv. Columbia</strain>
    </source>
</reference>
<reference key="3">
    <citation type="journal article" date="2005" name="Plant Physiol.">
        <title>Genome organization of more than 300 defensin-like genes in Arabidopsis.</title>
        <authorList>
            <person name="Silverstein K.A.T."/>
            <person name="Graham M.A."/>
            <person name="Paape T.D."/>
            <person name="VandenBosch K.A."/>
        </authorList>
    </citation>
    <scope>GENE FAMILY</scope>
</reference>
<name>DF275_ARATH</name>
<accession>Q2V4I9</accession>
<comment type="subcellular location">
    <subcellularLocation>
        <location evidence="1">Secreted</location>
    </subcellularLocation>
</comment>
<comment type="similarity">
    <text evidence="3">Belongs to the DEFL family.</text>
</comment>
<dbReference type="EMBL" id="AC023064">
    <property type="status" value="NOT_ANNOTATED_CDS"/>
    <property type="molecule type" value="Genomic_DNA"/>
</dbReference>
<dbReference type="EMBL" id="CP002684">
    <property type="protein sequence ID" value="AEE31793.1"/>
    <property type="molecule type" value="Genomic_DNA"/>
</dbReference>
<dbReference type="RefSeq" id="NP_001031141.1">
    <property type="nucleotide sequence ID" value="NM_001036064.2"/>
</dbReference>
<dbReference type="iPTMnet" id="Q2V4I9"/>
<dbReference type="PaxDb" id="3702-AT1G35435.1"/>
<dbReference type="EnsemblPlants" id="AT1G35435.1">
    <property type="protein sequence ID" value="AT1G35435.1"/>
    <property type="gene ID" value="AT1G35435"/>
</dbReference>
<dbReference type="GeneID" id="3766944"/>
<dbReference type="Gramene" id="AT1G35435.1">
    <property type="protein sequence ID" value="AT1G35435.1"/>
    <property type="gene ID" value="AT1G35435"/>
</dbReference>
<dbReference type="KEGG" id="ath:AT1G35435"/>
<dbReference type="Araport" id="AT1G35435"/>
<dbReference type="TAIR" id="AT1G35435"/>
<dbReference type="HOGENOM" id="CLU_195514_0_0_1"/>
<dbReference type="InParanoid" id="Q2V4I9"/>
<dbReference type="OMA" id="YEDECIY"/>
<dbReference type="OrthoDB" id="1026129at2759"/>
<dbReference type="PhylomeDB" id="Q2V4I9"/>
<dbReference type="PRO" id="PR:Q2V4I9"/>
<dbReference type="Proteomes" id="UP000006548">
    <property type="component" value="Chromosome 1"/>
</dbReference>
<dbReference type="ExpressionAtlas" id="Q2V4I9">
    <property type="expression patterns" value="baseline"/>
</dbReference>
<dbReference type="GO" id="GO:0005576">
    <property type="term" value="C:extracellular region"/>
    <property type="evidence" value="ECO:0007669"/>
    <property type="project" value="UniProtKB-SubCell"/>
</dbReference>
<dbReference type="GO" id="GO:0050832">
    <property type="term" value="P:defense response to fungus"/>
    <property type="evidence" value="ECO:0007669"/>
    <property type="project" value="UniProtKB-KW"/>
</dbReference>
<dbReference type="GO" id="GO:0031640">
    <property type="term" value="P:killing of cells of another organism"/>
    <property type="evidence" value="ECO:0007669"/>
    <property type="project" value="UniProtKB-KW"/>
</dbReference>
<dbReference type="InterPro" id="IPR010851">
    <property type="entry name" value="DEFL"/>
</dbReference>
<dbReference type="Pfam" id="PF25052">
    <property type="entry name" value="AtDEF-like"/>
    <property type="match status" value="1"/>
</dbReference>
<keyword id="KW-0929">Antimicrobial</keyword>
<keyword id="KW-1015">Disulfide bond</keyword>
<keyword id="KW-0295">Fungicide</keyword>
<keyword id="KW-0611">Plant defense</keyword>
<keyword id="KW-1185">Reference proteome</keyword>
<keyword id="KW-0964">Secreted</keyword>
<keyword id="KW-0732">Signal</keyword>
<feature type="signal peptide" evidence="2">
    <location>
        <begin position="1"/>
        <end position="23"/>
    </location>
</feature>
<feature type="chain" id="PRO_0000379736" description="Defensin-like protein 275">
    <location>
        <begin position="24"/>
        <end position="82"/>
    </location>
</feature>
<feature type="disulfide bond" evidence="1">
    <location>
        <begin position="36"/>
        <end position="78"/>
    </location>
</feature>
<feature type="disulfide bond" evidence="1">
    <location>
        <begin position="42"/>
        <end position="65"/>
    </location>
</feature>
<feature type="disulfide bond" evidence="1">
    <location>
        <begin position="48"/>
        <end position="76"/>
    </location>
</feature>
<feature type="disulfide bond" evidence="1">
    <location>
        <begin position="52"/>
        <end position="77"/>
    </location>
</feature>